<accession>Q5UNU7</accession>
<comment type="subcellular location">
    <subcellularLocation>
        <location evidence="3">Membrane</location>
        <topology evidence="3">Multi-pass membrane protein</topology>
    </subcellularLocation>
</comment>
<keyword id="KW-0449">Lipoprotein</keyword>
<keyword id="KW-0472">Membrane</keyword>
<keyword id="KW-0519">Myristate</keyword>
<keyword id="KW-1185">Reference proteome</keyword>
<keyword id="KW-0812">Transmembrane</keyword>
<keyword id="KW-1133">Transmembrane helix</keyword>
<organismHost>
    <name type="scientific">Acanthamoeba polyphaga</name>
    <name type="common">Amoeba</name>
    <dbReference type="NCBI Taxonomy" id="5757"/>
</organismHost>
<gene>
    <name type="ordered locus">MIMI_L682</name>
</gene>
<proteinExistence type="inferred from homology"/>
<dbReference type="EMBL" id="AY653733">
    <property type="protein sequence ID" value="AAV50943.1"/>
    <property type="molecule type" value="Genomic_DNA"/>
</dbReference>
<dbReference type="KEGG" id="vg:9925331"/>
<dbReference type="OrthoDB" id="35540at10239"/>
<dbReference type="Proteomes" id="UP000001134">
    <property type="component" value="Genome"/>
</dbReference>
<dbReference type="GO" id="GO:0016020">
    <property type="term" value="C:membrane"/>
    <property type="evidence" value="ECO:0007669"/>
    <property type="project" value="UniProtKB-SubCell"/>
</dbReference>
<organism>
    <name type="scientific">Acanthamoeba polyphaga mimivirus</name>
    <name type="common">APMV</name>
    <dbReference type="NCBI Taxonomy" id="212035"/>
    <lineage>
        <taxon>Viruses</taxon>
        <taxon>Varidnaviria</taxon>
        <taxon>Bamfordvirae</taxon>
        <taxon>Nucleocytoviricota</taxon>
        <taxon>Megaviricetes</taxon>
        <taxon>Imitervirales</taxon>
        <taxon>Mimiviridae</taxon>
        <taxon>Megamimivirinae</taxon>
        <taxon>Mimivirus</taxon>
        <taxon>Mimivirus bradfordmassiliense</taxon>
    </lineage>
</organism>
<protein>
    <recommendedName>
        <fullName>Uncharacterized protein L682</fullName>
    </recommendedName>
</protein>
<feature type="initiator methionine" description="Removed" evidence="1">
    <location>
        <position position="1"/>
    </location>
</feature>
<feature type="chain" id="PRO_0000071314" description="Uncharacterized protein L682">
    <location>
        <begin position="2"/>
        <end position="114"/>
    </location>
</feature>
<feature type="transmembrane region" description="Helical" evidence="1">
    <location>
        <begin position="11"/>
        <end position="31"/>
    </location>
</feature>
<feature type="transmembrane region" description="Helical" evidence="1">
    <location>
        <begin position="44"/>
        <end position="64"/>
    </location>
</feature>
<feature type="region of interest" description="Disordered" evidence="2">
    <location>
        <begin position="73"/>
        <end position="114"/>
    </location>
</feature>
<feature type="compositionally biased region" description="Basic and acidic residues" evidence="2">
    <location>
        <begin position="75"/>
        <end position="92"/>
    </location>
</feature>
<feature type="compositionally biased region" description="Polar residues" evidence="2">
    <location>
        <begin position="96"/>
        <end position="114"/>
    </location>
</feature>
<feature type="lipid moiety-binding region" description="N-myristoyl glycine; by host" evidence="1">
    <location>
        <position position="2"/>
    </location>
</feature>
<sequence>MGNYISFKKEFGLILVGAIIFTASYLWKDLLLEIEEKYFPKGYGLMWRSIYTILVTVILVLVAIHLKNQFGLVNKDSKDPKDKSIEFDDSPIRDGSSGTPDNSNEPTDLSVETS</sequence>
<name>YL682_MIMIV</name>
<evidence type="ECO:0000255" key="1"/>
<evidence type="ECO:0000256" key="2">
    <source>
        <dbReference type="SAM" id="MobiDB-lite"/>
    </source>
</evidence>
<evidence type="ECO:0000305" key="3"/>
<reference key="1">
    <citation type="journal article" date="2004" name="Science">
        <title>The 1.2-megabase genome sequence of Mimivirus.</title>
        <authorList>
            <person name="Raoult D."/>
            <person name="Audic S."/>
            <person name="Robert C."/>
            <person name="Abergel C."/>
            <person name="Renesto P."/>
            <person name="Ogata H."/>
            <person name="La Scola B."/>
            <person name="Susan M."/>
            <person name="Claverie J.-M."/>
        </authorList>
    </citation>
    <scope>NUCLEOTIDE SEQUENCE [LARGE SCALE GENOMIC DNA]</scope>
    <source>
        <strain>Rowbotham-Bradford</strain>
    </source>
</reference>